<dbReference type="EMBL" id="FO080619">
    <property type="protein sequence ID" value="CCD65216.1"/>
    <property type="molecule type" value="Genomic_DNA"/>
</dbReference>
<dbReference type="PIR" id="T34354">
    <property type="entry name" value="T34354"/>
</dbReference>
<dbReference type="RefSeq" id="NP_498365.1">
    <property type="nucleotide sequence ID" value="NM_065964.1"/>
</dbReference>
<dbReference type="PaxDb" id="6239-T12A2.10"/>
<dbReference type="EnsemblMetazoa" id="T12A2.10.1">
    <property type="protein sequence ID" value="T12A2.10.1"/>
    <property type="gene ID" value="WBGene00005167"/>
</dbReference>
<dbReference type="GeneID" id="191835"/>
<dbReference type="KEGG" id="cel:CELE_T12A2.10"/>
<dbReference type="UCSC" id="T12A2.10">
    <property type="organism name" value="c. elegans"/>
</dbReference>
<dbReference type="AGR" id="WB:WBGene00005167"/>
<dbReference type="CTD" id="191835"/>
<dbReference type="WormBase" id="T12A2.10">
    <property type="protein sequence ID" value="CE07479"/>
    <property type="gene ID" value="WBGene00005167"/>
    <property type="gene designation" value="srg-9"/>
</dbReference>
<dbReference type="eggNOG" id="ENOG502TGK9">
    <property type="taxonomic scope" value="Eukaryota"/>
</dbReference>
<dbReference type="GeneTree" id="ENSGT00970000195841"/>
<dbReference type="HOGENOM" id="CLU_061253_1_0_1"/>
<dbReference type="InParanoid" id="P46566"/>
<dbReference type="OMA" id="CVIHSIC"/>
<dbReference type="OrthoDB" id="5842884at2759"/>
<dbReference type="PhylomeDB" id="P46566"/>
<dbReference type="PRO" id="PR:P46566"/>
<dbReference type="Proteomes" id="UP000001940">
    <property type="component" value="Chromosome III"/>
</dbReference>
<dbReference type="GO" id="GO:0016020">
    <property type="term" value="C:membrane"/>
    <property type="evidence" value="ECO:0007669"/>
    <property type="project" value="UniProtKB-SubCell"/>
</dbReference>
<dbReference type="GO" id="GO:0004888">
    <property type="term" value="F:transmembrane signaling receptor activity"/>
    <property type="evidence" value="ECO:0007669"/>
    <property type="project" value="InterPro"/>
</dbReference>
<dbReference type="GO" id="GO:0007606">
    <property type="term" value="P:sensory perception of chemical stimulus"/>
    <property type="evidence" value="ECO:0007669"/>
    <property type="project" value="InterPro"/>
</dbReference>
<dbReference type="InterPro" id="IPR000609">
    <property type="entry name" value="7TM_GPCR_serpentine_rcpt_Srg"/>
</dbReference>
<dbReference type="InterPro" id="IPR051119">
    <property type="entry name" value="Nematode_SR-like"/>
</dbReference>
<dbReference type="PANTHER" id="PTHR31627:SF4">
    <property type="entry name" value="SERPENTINE RECEPTOR CLASS GAMMA-9"/>
    <property type="match status" value="1"/>
</dbReference>
<dbReference type="PANTHER" id="PTHR31627">
    <property type="entry name" value="SERPENTINE RECEPTOR CLASS GAMMA-RELATED"/>
    <property type="match status" value="1"/>
</dbReference>
<dbReference type="Pfam" id="PF02118">
    <property type="entry name" value="Srg"/>
    <property type="match status" value="1"/>
</dbReference>
<dbReference type="PRINTS" id="PR00698">
    <property type="entry name" value="TMPROTEINSRG"/>
</dbReference>
<dbReference type="SUPFAM" id="SSF81321">
    <property type="entry name" value="Family A G protein-coupled receptor-like"/>
    <property type="match status" value="1"/>
</dbReference>
<feature type="chain" id="PRO_0000104559" description="Serpentine receptor class gamma-9">
    <location>
        <begin position="1"/>
        <end position="336"/>
    </location>
</feature>
<feature type="transmembrane region" description="Helical" evidence="1">
    <location>
        <begin position="30"/>
        <end position="50"/>
    </location>
</feature>
<feature type="transmembrane region" description="Helical" evidence="1">
    <location>
        <begin position="64"/>
        <end position="84"/>
    </location>
</feature>
<feature type="transmembrane region" description="Helical" evidence="1">
    <location>
        <begin position="111"/>
        <end position="131"/>
    </location>
</feature>
<feature type="transmembrane region" description="Helical" evidence="1">
    <location>
        <begin position="152"/>
        <end position="172"/>
    </location>
</feature>
<feature type="transmembrane region" description="Helical" evidence="1">
    <location>
        <begin position="200"/>
        <end position="220"/>
    </location>
</feature>
<feature type="transmembrane region" description="Helical" evidence="1">
    <location>
        <begin position="237"/>
        <end position="257"/>
    </location>
</feature>
<feature type="transmembrane region" description="Helical" evidence="1">
    <location>
        <begin position="271"/>
        <end position="291"/>
    </location>
</feature>
<accession>P46566</accession>
<proteinExistence type="inferred from homology"/>
<gene>
    <name type="primary">srg-9</name>
    <name type="ORF">T12A2.10</name>
</gene>
<keyword id="KW-0472">Membrane</keyword>
<keyword id="KW-1185">Reference proteome</keyword>
<keyword id="KW-0812">Transmembrane</keyword>
<keyword id="KW-1133">Transmembrane helix</keyword>
<name>SRG9_CAEEL</name>
<sequence length="336" mass="38735">MDTNSTTPMSITDMECNPNYSYLVENIKYLLQAAYMVPPAFLYARILYVIWVKHRKVYSRHQFFVIYSMDSIVGFILLLLDIFITRFFVYVPQLCIPASKFFQSHSLLMNIYYPLLNYLHCAQPLIQIFLTLNRMSSVIWPVDHNKVWSKNLSFIVAFVSLSPFLIIWNTIISPKIIIYYFGGFFMLGLKAVEWADISLFLFLVRSVAVIITVASTVIMFLRMSKMKKRMKSSERTLCLACVIHSICFMVPSFFEALANFNEAYGSSWVNFLIQPFAWDVLNVGSPLIMIFVSGQLRHHVLEISIGCCKPKNKPKTITVHTVTAHVSSRNGTSIFR</sequence>
<evidence type="ECO:0000255" key="1"/>
<evidence type="ECO:0000305" key="2"/>
<organism>
    <name type="scientific">Caenorhabditis elegans</name>
    <dbReference type="NCBI Taxonomy" id="6239"/>
    <lineage>
        <taxon>Eukaryota</taxon>
        <taxon>Metazoa</taxon>
        <taxon>Ecdysozoa</taxon>
        <taxon>Nematoda</taxon>
        <taxon>Chromadorea</taxon>
        <taxon>Rhabditida</taxon>
        <taxon>Rhabditina</taxon>
        <taxon>Rhabditomorpha</taxon>
        <taxon>Rhabditoidea</taxon>
        <taxon>Rhabditidae</taxon>
        <taxon>Peloderinae</taxon>
        <taxon>Caenorhabditis</taxon>
    </lineage>
</organism>
<comment type="subcellular location">
    <subcellularLocation>
        <location evidence="2">Membrane</location>
        <topology evidence="2">Multi-pass membrane protein</topology>
    </subcellularLocation>
</comment>
<comment type="similarity">
    <text evidence="2">Belongs to the nematode receptor-like protein srg family.</text>
</comment>
<protein>
    <recommendedName>
        <fullName>Serpentine receptor class gamma-9</fullName>
        <shortName>Protein srg-9</shortName>
    </recommendedName>
</protein>
<reference key="1">
    <citation type="journal article" date="1998" name="Science">
        <title>Genome sequence of the nematode C. elegans: a platform for investigating biology.</title>
        <authorList>
            <consortium name="The C. elegans sequencing consortium"/>
        </authorList>
    </citation>
    <scope>NUCLEOTIDE SEQUENCE [LARGE SCALE GENOMIC DNA]</scope>
    <source>
        <strain>Bristol N2</strain>
    </source>
</reference>